<keyword id="KW-0488">Methylation</keyword>
<keyword id="KW-0687">Ribonucleoprotein</keyword>
<keyword id="KW-0689">Ribosomal protein</keyword>
<keyword id="KW-0694">RNA-binding</keyword>
<keyword id="KW-0699">rRNA-binding</keyword>
<protein>
    <recommendedName>
        <fullName evidence="1">Large ribosomal subunit protein uL11</fullName>
    </recommendedName>
    <alternativeName>
        <fullName evidence="2">50S ribosomal protein L11</fullName>
    </alternativeName>
</protein>
<feature type="chain" id="PRO_0000258243" description="Large ribosomal subunit protein uL11">
    <location>
        <begin position="1"/>
        <end position="142"/>
    </location>
</feature>
<accession>Q1C1T7</accession>
<organism>
    <name type="scientific">Yersinia pestis bv. Antiqua (strain Antiqua)</name>
    <dbReference type="NCBI Taxonomy" id="360102"/>
    <lineage>
        <taxon>Bacteria</taxon>
        <taxon>Pseudomonadati</taxon>
        <taxon>Pseudomonadota</taxon>
        <taxon>Gammaproteobacteria</taxon>
        <taxon>Enterobacterales</taxon>
        <taxon>Yersiniaceae</taxon>
        <taxon>Yersinia</taxon>
    </lineage>
</organism>
<proteinExistence type="inferred from homology"/>
<comment type="function">
    <text evidence="1">Forms part of the ribosomal stalk which helps the ribosome interact with GTP-bound translation factors.</text>
</comment>
<comment type="subunit">
    <text evidence="1">Part of the ribosomal stalk of the 50S ribosomal subunit. Interacts with L10 and the large rRNA to form the base of the stalk. L10 forms an elongated spine to which L12 dimers bind in a sequential fashion forming a multimeric L10(L12)X complex.</text>
</comment>
<comment type="PTM">
    <text evidence="1">One or more lysine residues are methylated.</text>
</comment>
<comment type="similarity">
    <text evidence="1">Belongs to the universal ribosomal protein uL11 family.</text>
</comment>
<dbReference type="EMBL" id="CP000308">
    <property type="protein sequence ID" value="ABG15585.1"/>
    <property type="molecule type" value="Genomic_DNA"/>
</dbReference>
<dbReference type="RefSeq" id="WP_002210672.1">
    <property type="nucleotide sequence ID" value="NZ_CP009906.1"/>
</dbReference>
<dbReference type="SMR" id="Q1C1T7"/>
<dbReference type="GeneID" id="96663772"/>
<dbReference type="KEGG" id="ypa:YPA_3623"/>
<dbReference type="Proteomes" id="UP000001971">
    <property type="component" value="Chromosome"/>
</dbReference>
<dbReference type="GO" id="GO:0022625">
    <property type="term" value="C:cytosolic large ribosomal subunit"/>
    <property type="evidence" value="ECO:0007669"/>
    <property type="project" value="TreeGrafter"/>
</dbReference>
<dbReference type="GO" id="GO:0070180">
    <property type="term" value="F:large ribosomal subunit rRNA binding"/>
    <property type="evidence" value="ECO:0007669"/>
    <property type="project" value="UniProtKB-UniRule"/>
</dbReference>
<dbReference type="GO" id="GO:0003735">
    <property type="term" value="F:structural constituent of ribosome"/>
    <property type="evidence" value="ECO:0007669"/>
    <property type="project" value="InterPro"/>
</dbReference>
<dbReference type="GO" id="GO:0006412">
    <property type="term" value="P:translation"/>
    <property type="evidence" value="ECO:0007669"/>
    <property type="project" value="UniProtKB-UniRule"/>
</dbReference>
<dbReference type="CDD" id="cd00349">
    <property type="entry name" value="Ribosomal_L11"/>
    <property type="match status" value="1"/>
</dbReference>
<dbReference type="FunFam" id="1.10.10.250:FF:000001">
    <property type="entry name" value="50S ribosomal protein L11"/>
    <property type="match status" value="1"/>
</dbReference>
<dbReference type="FunFam" id="3.30.1550.10:FF:000001">
    <property type="entry name" value="50S ribosomal protein L11"/>
    <property type="match status" value="1"/>
</dbReference>
<dbReference type="Gene3D" id="1.10.10.250">
    <property type="entry name" value="Ribosomal protein L11, C-terminal domain"/>
    <property type="match status" value="1"/>
</dbReference>
<dbReference type="Gene3D" id="3.30.1550.10">
    <property type="entry name" value="Ribosomal protein L11/L12, N-terminal domain"/>
    <property type="match status" value="1"/>
</dbReference>
<dbReference type="HAMAP" id="MF_00736">
    <property type="entry name" value="Ribosomal_uL11"/>
    <property type="match status" value="1"/>
</dbReference>
<dbReference type="InterPro" id="IPR000911">
    <property type="entry name" value="Ribosomal_uL11"/>
</dbReference>
<dbReference type="InterPro" id="IPR006519">
    <property type="entry name" value="Ribosomal_uL11_bac-typ"/>
</dbReference>
<dbReference type="InterPro" id="IPR020783">
    <property type="entry name" value="Ribosomal_uL11_C"/>
</dbReference>
<dbReference type="InterPro" id="IPR036769">
    <property type="entry name" value="Ribosomal_uL11_C_sf"/>
</dbReference>
<dbReference type="InterPro" id="IPR020785">
    <property type="entry name" value="Ribosomal_uL11_CS"/>
</dbReference>
<dbReference type="InterPro" id="IPR020784">
    <property type="entry name" value="Ribosomal_uL11_N"/>
</dbReference>
<dbReference type="InterPro" id="IPR036796">
    <property type="entry name" value="Ribosomal_uL11_N_sf"/>
</dbReference>
<dbReference type="NCBIfam" id="TIGR01632">
    <property type="entry name" value="L11_bact"/>
    <property type="match status" value="1"/>
</dbReference>
<dbReference type="PANTHER" id="PTHR11661">
    <property type="entry name" value="60S RIBOSOMAL PROTEIN L12"/>
    <property type="match status" value="1"/>
</dbReference>
<dbReference type="PANTHER" id="PTHR11661:SF1">
    <property type="entry name" value="LARGE RIBOSOMAL SUBUNIT PROTEIN UL11M"/>
    <property type="match status" value="1"/>
</dbReference>
<dbReference type="Pfam" id="PF00298">
    <property type="entry name" value="Ribosomal_L11"/>
    <property type="match status" value="1"/>
</dbReference>
<dbReference type="Pfam" id="PF03946">
    <property type="entry name" value="Ribosomal_L11_N"/>
    <property type="match status" value="1"/>
</dbReference>
<dbReference type="SMART" id="SM00649">
    <property type="entry name" value="RL11"/>
    <property type="match status" value="1"/>
</dbReference>
<dbReference type="SUPFAM" id="SSF54747">
    <property type="entry name" value="Ribosomal L11/L12e N-terminal domain"/>
    <property type="match status" value="1"/>
</dbReference>
<dbReference type="SUPFAM" id="SSF46906">
    <property type="entry name" value="Ribosomal protein L11, C-terminal domain"/>
    <property type="match status" value="1"/>
</dbReference>
<dbReference type="PROSITE" id="PS00359">
    <property type="entry name" value="RIBOSOMAL_L11"/>
    <property type="match status" value="1"/>
</dbReference>
<sequence>MAKKVQAYVKLQVAAGMANPSPPVGPALGQQGVNIMEFCKAFNAKTESIEKGLPIPVVITVYSDRSFTFVTKTPPAAVLLKKAAGIKSGSGVPNKDKVGKVTSAQVREIAETKAADMTGSDVDAMMRSIEGTAHSMGLVVEG</sequence>
<name>RL11_YERPA</name>
<reference key="1">
    <citation type="journal article" date="2006" name="J. Bacteriol.">
        <title>Complete genome sequence of Yersinia pestis strains Antiqua and Nepal516: evidence of gene reduction in an emerging pathogen.</title>
        <authorList>
            <person name="Chain P.S.G."/>
            <person name="Hu P."/>
            <person name="Malfatti S.A."/>
            <person name="Radnedge L."/>
            <person name="Larimer F."/>
            <person name="Vergez L.M."/>
            <person name="Worsham P."/>
            <person name="Chu M.C."/>
            <person name="Andersen G.L."/>
        </authorList>
    </citation>
    <scope>NUCLEOTIDE SEQUENCE [LARGE SCALE GENOMIC DNA]</scope>
    <source>
        <strain>Antiqua</strain>
    </source>
</reference>
<gene>
    <name evidence="1" type="primary">rplK</name>
    <name type="ordered locus">YPA_3623</name>
</gene>
<evidence type="ECO:0000255" key="1">
    <source>
        <dbReference type="HAMAP-Rule" id="MF_00736"/>
    </source>
</evidence>
<evidence type="ECO:0000305" key="2"/>